<gene>
    <name evidence="1" type="primary">recA</name>
    <name type="ordered locus">A9601_17691</name>
</gene>
<reference key="1">
    <citation type="journal article" date="2007" name="PLoS Genet.">
        <title>Patterns and implications of gene gain and loss in the evolution of Prochlorococcus.</title>
        <authorList>
            <person name="Kettler G.C."/>
            <person name="Martiny A.C."/>
            <person name="Huang K."/>
            <person name="Zucker J."/>
            <person name="Coleman M.L."/>
            <person name="Rodrigue S."/>
            <person name="Chen F."/>
            <person name="Lapidus A."/>
            <person name="Ferriera S."/>
            <person name="Johnson J."/>
            <person name="Steglich C."/>
            <person name="Church G.M."/>
            <person name="Richardson P."/>
            <person name="Chisholm S.W."/>
        </authorList>
    </citation>
    <scope>NUCLEOTIDE SEQUENCE [LARGE SCALE GENOMIC DNA]</scope>
    <source>
        <strain>AS9601</strain>
    </source>
</reference>
<evidence type="ECO:0000255" key="1">
    <source>
        <dbReference type="HAMAP-Rule" id="MF_00268"/>
    </source>
</evidence>
<name>RECA_PROMS</name>
<proteinExistence type="inferred from homology"/>
<sequence>MSLEEKKKTESKEKDKALSLVLGQIERNFGRGSIMRLGDASRMKVETISTGALTLDLALGGGYPKGRVVEVYGPESSGKTTLTLHAIAEVQKNGGVAAFVDAEHALDPVYAASLGVDVENLLVSQPDTGEMALEIVDQLIRSSAVDLVVVDSVAALTPRAEIEGEMGDHVIGSQARLMSQAMRKITGNIGKSGCTVIFLNQLRLKIGVTYGNPETTTGGNALKFYASVRLDIRRIQTLKRGTEEYGIRAKVKVAKNKVAPPFRIAEFDILFGKGISTTGCLLDLAEETNIIIRRGAWYSYEGENIGQGRDNTIIWLDQNLEIRNKVESMVKEKLTEGTEVSSNSMKALNSNPANTIAVNDIKTVA</sequence>
<comment type="function">
    <text evidence="1">Can catalyze the hydrolysis of ATP in the presence of single-stranded DNA, the ATP-dependent uptake of single-stranded DNA by duplex DNA, and the ATP-dependent hybridization of homologous single-stranded DNAs. It interacts with LexA causing its activation and leading to its autocatalytic cleavage.</text>
</comment>
<comment type="subcellular location">
    <subcellularLocation>
        <location evidence="1">Cytoplasm</location>
    </subcellularLocation>
</comment>
<comment type="similarity">
    <text evidence="1">Belongs to the RecA family.</text>
</comment>
<organism>
    <name type="scientific">Prochlorococcus marinus (strain AS9601)</name>
    <dbReference type="NCBI Taxonomy" id="146891"/>
    <lineage>
        <taxon>Bacteria</taxon>
        <taxon>Bacillati</taxon>
        <taxon>Cyanobacteriota</taxon>
        <taxon>Cyanophyceae</taxon>
        <taxon>Synechococcales</taxon>
        <taxon>Prochlorococcaceae</taxon>
        <taxon>Prochlorococcus</taxon>
    </lineage>
</organism>
<accession>A2BTE1</accession>
<protein>
    <recommendedName>
        <fullName evidence="1">Protein RecA</fullName>
    </recommendedName>
    <alternativeName>
        <fullName evidence="1">Recombinase A</fullName>
    </alternativeName>
</protein>
<dbReference type="EMBL" id="CP000551">
    <property type="protein sequence ID" value="ABM71052.1"/>
    <property type="molecule type" value="Genomic_DNA"/>
</dbReference>
<dbReference type="RefSeq" id="WP_011819174.1">
    <property type="nucleotide sequence ID" value="NC_008816.1"/>
</dbReference>
<dbReference type="SMR" id="A2BTE1"/>
<dbReference type="STRING" id="146891.A9601_17691"/>
<dbReference type="KEGG" id="pmb:A9601_17691"/>
<dbReference type="eggNOG" id="COG0468">
    <property type="taxonomic scope" value="Bacteria"/>
</dbReference>
<dbReference type="HOGENOM" id="CLU_040469_3_2_3"/>
<dbReference type="OrthoDB" id="9776733at2"/>
<dbReference type="Proteomes" id="UP000002590">
    <property type="component" value="Chromosome"/>
</dbReference>
<dbReference type="GO" id="GO:0005829">
    <property type="term" value="C:cytosol"/>
    <property type="evidence" value="ECO:0007669"/>
    <property type="project" value="TreeGrafter"/>
</dbReference>
<dbReference type="GO" id="GO:0005524">
    <property type="term" value="F:ATP binding"/>
    <property type="evidence" value="ECO:0007669"/>
    <property type="project" value="UniProtKB-UniRule"/>
</dbReference>
<dbReference type="GO" id="GO:0016887">
    <property type="term" value="F:ATP hydrolysis activity"/>
    <property type="evidence" value="ECO:0007669"/>
    <property type="project" value="InterPro"/>
</dbReference>
<dbReference type="GO" id="GO:0140664">
    <property type="term" value="F:ATP-dependent DNA damage sensor activity"/>
    <property type="evidence" value="ECO:0007669"/>
    <property type="project" value="InterPro"/>
</dbReference>
<dbReference type="GO" id="GO:0003684">
    <property type="term" value="F:damaged DNA binding"/>
    <property type="evidence" value="ECO:0007669"/>
    <property type="project" value="UniProtKB-UniRule"/>
</dbReference>
<dbReference type="GO" id="GO:0003697">
    <property type="term" value="F:single-stranded DNA binding"/>
    <property type="evidence" value="ECO:0007669"/>
    <property type="project" value="UniProtKB-UniRule"/>
</dbReference>
<dbReference type="GO" id="GO:0006310">
    <property type="term" value="P:DNA recombination"/>
    <property type="evidence" value="ECO:0007669"/>
    <property type="project" value="UniProtKB-UniRule"/>
</dbReference>
<dbReference type="GO" id="GO:0006281">
    <property type="term" value="P:DNA repair"/>
    <property type="evidence" value="ECO:0007669"/>
    <property type="project" value="UniProtKB-UniRule"/>
</dbReference>
<dbReference type="GO" id="GO:0009432">
    <property type="term" value="P:SOS response"/>
    <property type="evidence" value="ECO:0007669"/>
    <property type="project" value="UniProtKB-UniRule"/>
</dbReference>
<dbReference type="CDD" id="cd00983">
    <property type="entry name" value="RecA"/>
    <property type="match status" value="1"/>
</dbReference>
<dbReference type="FunFam" id="3.40.50.300:FF:000087">
    <property type="entry name" value="Recombinase RecA"/>
    <property type="match status" value="1"/>
</dbReference>
<dbReference type="Gene3D" id="3.40.50.300">
    <property type="entry name" value="P-loop containing nucleotide triphosphate hydrolases"/>
    <property type="match status" value="1"/>
</dbReference>
<dbReference type="HAMAP" id="MF_00268">
    <property type="entry name" value="RecA"/>
    <property type="match status" value="1"/>
</dbReference>
<dbReference type="InterPro" id="IPR003593">
    <property type="entry name" value="AAA+_ATPase"/>
</dbReference>
<dbReference type="InterPro" id="IPR013765">
    <property type="entry name" value="DNA_recomb/repair_RecA"/>
</dbReference>
<dbReference type="InterPro" id="IPR020584">
    <property type="entry name" value="DNA_recomb/repair_RecA_CS"/>
</dbReference>
<dbReference type="InterPro" id="IPR027417">
    <property type="entry name" value="P-loop_NTPase"/>
</dbReference>
<dbReference type="InterPro" id="IPR049261">
    <property type="entry name" value="RecA-like_C"/>
</dbReference>
<dbReference type="InterPro" id="IPR049428">
    <property type="entry name" value="RecA-like_N"/>
</dbReference>
<dbReference type="InterPro" id="IPR020588">
    <property type="entry name" value="RecA_ATP-bd"/>
</dbReference>
<dbReference type="InterPro" id="IPR023400">
    <property type="entry name" value="RecA_C_sf"/>
</dbReference>
<dbReference type="InterPro" id="IPR020587">
    <property type="entry name" value="RecA_monomer-monomer_interface"/>
</dbReference>
<dbReference type="NCBIfam" id="TIGR02012">
    <property type="entry name" value="tigrfam_recA"/>
    <property type="match status" value="1"/>
</dbReference>
<dbReference type="PANTHER" id="PTHR45900:SF1">
    <property type="entry name" value="MITOCHONDRIAL DNA REPAIR PROTEIN RECA HOMOLOG-RELATED"/>
    <property type="match status" value="1"/>
</dbReference>
<dbReference type="PANTHER" id="PTHR45900">
    <property type="entry name" value="RECA"/>
    <property type="match status" value="1"/>
</dbReference>
<dbReference type="Pfam" id="PF00154">
    <property type="entry name" value="RecA"/>
    <property type="match status" value="1"/>
</dbReference>
<dbReference type="Pfam" id="PF21096">
    <property type="entry name" value="RecA_C"/>
    <property type="match status" value="1"/>
</dbReference>
<dbReference type="PRINTS" id="PR00142">
    <property type="entry name" value="RECA"/>
</dbReference>
<dbReference type="SMART" id="SM00382">
    <property type="entry name" value="AAA"/>
    <property type="match status" value="1"/>
</dbReference>
<dbReference type="SUPFAM" id="SSF52540">
    <property type="entry name" value="P-loop containing nucleoside triphosphate hydrolases"/>
    <property type="match status" value="1"/>
</dbReference>
<dbReference type="SUPFAM" id="SSF54752">
    <property type="entry name" value="RecA protein, C-terminal domain"/>
    <property type="match status" value="1"/>
</dbReference>
<dbReference type="PROSITE" id="PS00321">
    <property type="entry name" value="RECA_1"/>
    <property type="match status" value="1"/>
</dbReference>
<dbReference type="PROSITE" id="PS50162">
    <property type="entry name" value="RECA_2"/>
    <property type="match status" value="1"/>
</dbReference>
<dbReference type="PROSITE" id="PS50163">
    <property type="entry name" value="RECA_3"/>
    <property type="match status" value="1"/>
</dbReference>
<keyword id="KW-0067">ATP-binding</keyword>
<keyword id="KW-0963">Cytoplasm</keyword>
<keyword id="KW-0227">DNA damage</keyword>
<keyword id="KW-0233">DNA recombination</keyword>
<keyword id="KW-0234">DNA repair</keyword>
<keyword id="KW-0238">DNA-binding</keyword>
<keyword id="KW-0547">Nucleotide-binding</keyword>
<keyword id="KW-0742">SOS response</keyword>
<feature type="chain" id="PRO_1000047964" description="Protein RecA">
    <location>
        <begin position="1"/>
        <end position="365"/>
    </location>
</feature>
<feature type="binding site" evidence="1">
    <location>
        <begin position="73"/>
        <end position="80"/>
    </location>
    <ligand>
        <name>ATP</name>
        <dbReference type="ChEBI" id="CHEBI:30616"/>
    </ligand>
</feature>